<organism>
    <name type="scientific">Arabidopsis thaliana</name>
    <name type="common">Mouse-ear cress</name>
    <dbReference type="NCBI Taxonomy" id="3702"/>
    <lineage>
        <taxon>Eukaryota</taxon>
        <taxon>Viridiplantae</taxon>
        <taxon>Streptophyta</taxon>
        <taxon>Embryophyta</taxon>
        <taxon>Tracheophyta</taxon>
        <taxon>Spermatophyta</taxon>
        <taxon>Magnoliopsida</taxon>
        <taxon>eudicotyledons</taxon>
        <taxon>Gunneridae</taxon>
        <taxon>Pentapetalae</taxon>
        <taxon>rosids</taxon>
        <taxon>malvids</taxon>
        <taxon>Brassicales</taxon>
        <taxon>Brassicaceae</taxon>
        <taxon>Camelineae</taxon>
        <taxon>Arabidopsis</taxon>
    </lineage>
</organism>
<accession>Q94JW8</accession>
<accession>Q0WSG7</accession>
<accession>Q9LQA4</accession>
<accession>Q9S7A2</accession>
<gene>
    <name type="primary">SPL6</name>
    <name type="ordered locus">At1g69170</name>
    <name type="ORF">F23O10.24</name>
    <name type="ORF">F4N2.13</name>
</gene>
<proteinExistence type="evidence at protein level"/>
<comment type="function">
    <text evidence="1">Trans-acting factor that binds specifically to the consensus nucleotide sequence 5'-TNCGTACAA-3'.</text>
</comment>
<comment type="cofactor">
    <cofactor evidence="1">
        <name>Zn(2+)</name>
        <dbReference type="ChEBI" id="CHEBI:29105"/>
    </cofactor>
    <text evidence="1">Binds 2 Zn(2+) ions per subunit.</text>
</comment>
<comment type="interaction">
    <interactant intactId="EBI-4428552">
        <id>Q94JW8</id>
    </interactant>
    <interactant intactId="EBI-3133327">
        <id>O82277</id>
        <label>TCP10</label>
    </interactant>
    <organismsDiffer>false</organismsDiffer>
    <experiments>3</experiments>
</comment>
<comment type="subcellular location">
    <subcellularLocation>
        <location evidence="6">Nucleus</location>
    </subcellularLocation>
</comment>
<comment type="developmental stage">
    <text evidence="4 5">Expressed constitutively during plant development, weak increase during flowering.</text>
</comment>
<comment type="induction">
    <text evidence="7">Negatively regulated by microRNAs miR156 and miR157.</text>
</comment>
<comment type="domain">
    <text>The SBP-type zinc finger is required for the binding to DNA.</text>
</comment>
<comment type="sequence caution" evidence="6">
    <conflict type="erroneous gene model prediction">
        <sequence resource="EMBL-CDS" id="AAF27058"/>
    </conflict>
</comment>
<dbReference type="EMBL" id="AJ011643">
    <property type="protein sequence ID" value="CAB56595.1"/>
    <property type="molecule type" value="mRNA"/>
</dbReference>
<dbReference type="EMBL" id="AJ011644">
    <property type="protein sequence ID" value="CAB56596.1"/>
    <property type="molecule type" value="Genomic_DNA"/>
</dbReference>
<dbReference type="EMBL" id="AC008262">
    <property type="protein sequence ID" value="AAF27058.1"/>
    <property type="status" value="ALT_SEQ"/>
    <property type="molecule type" value="Genomic_DNA"/>
</dbReference>
<dbReference type="EMBL" id="AC018364">
    <property type="protein sequence ID" value="AAG52487.1"/>
    <property type="molecule type" value="Genomic_DNA"/>
</dbReference>
<dbReference type="EMBL" id="CP002684">
    <property type="protein sequence ID" value="AEE34890.1"/>
    <property type="molecule type" value="Genomic_DNA"/>
</dbReference>
<dbReference type="EMBL" id="AF370612">
    <property type="protein sequence ID" value="AAK43931.1"/>
    <property type="molecule type" value="mRNA"/>
</dbReference>
<dbReference type="EMBL" id="BT006436">
    <property type="protein sequence ID" value="AAP21244.1"/>
    <property type="molecule type" value="mRNA"/>
</dbReference>
<dbReference type="EMBL" id="AK227964">
    <property type="protein sequence ID" value="BAE99931.1"/>
    <property type="molecule type" value="mRNA"/>
</dbReference>
<dbReference type="PIR" id="T52592">
    <property type="entry name" value="T52592"/>
</dbReference>
<dbReference type="RefSeq" id="NP_177077.3">
    <property type="nucleotide sequence ID" value="NM_105584.6"/>
</dbReference>
<dbReference type="SMR" id="Q94JW8"/>
<dbReference type="BioGRID" id="28469">
    <property type="interactions" value="28"/>
</dbReference>
<dbReference type="FunCoup" id="Q94JW8">
    <property type="interactions" value="507"/>
</dbReference>
<dbReference type="IntAct" id="Q94JW8">
    <property type="interactions" value="29"/>
</dbReference>
<dbReference type="STRING" id="3702.Q94JW8"/>
<dbReference type="PaxDb" id="3702-AT1G69170.1"/>
<dbReference type="EnsemblPlants" id="AT1G69170.1">
    <property type="protein sequence ID" value="AT1G69170.1"/>
    <property type="gene ID" value="AT1G69170"/>
</dbReference>
<dbReference type="GeneID" id="843248"/>
<dbReference type="Gramene" id="AT1G69170.1">
    <property type="protein sequence ID" value="AT1G69170.1"/>
    <property type="gene ID" value="AT1G69170"/>
</dbReference>
<dbReference type="KEGG" id="ath:AT1G69170"/>
<dbReference type="Araport" id="AT1G69170"/>
<dbReference type="TAIR" id="AT1G69170">
    <property type="gene designation" value="SPL6"/>
</dbReference>
<dbReference type="eggNOG" id="ENOG502QUHN">
    <property type="taxonomic scope" value="Eukaryota"/>
</dbReference>
<dbReference type="HOGENOM" id="CLU_835095_0_0_1"/>
<dbReference type="InParanoid" id="Q94JW8"/>
<dbReference type="OMA" id="MDEHDHR"/>
<dbReference type="OrthoDB" id="514967at2759"/>
<dbReference type="PhylomeDB" id="Q94JW8"/>
<dbReference type="PRO" id="PR:Q94JW8"/>
<dbReference type="Proteomes" id="UP000006548">
    <property type="component" value="Chromosome 1"/>
</dbReference>
<dbReference type="ExpressionAtlas" id="Q94JW8">
    <property type="expression patterns" value="baseline and differential"/>
</dbReference>
<dbReference type="GO" id="GO:0005634">
    <property type="term" value="C:nucleus"/>
    <property type="evidence" value="ECO:0007669"/>
    <property type="project" value="UniProtKB-SubCell"/>
</dbReference>
<dbReference type="GO" id="GO:0003700">
    <property type="term" value="F:DNA-binding transcription factor activity"/>
    <property type="evidence" value="ECO:0000250"/>
    <property type="project" value="TAIR"/>
</dbReference>
<dbReference type="GO" id="GO:0000976">
    <property type="term" value="F:transcription cis-regulatory region binding"/>
    <property type="evidence" value="ECO:0000353"/>
    <property type="project" value="TAIR"/>
</dbReference>
<dbReference type="GO" id="GO:0008270">
    <property type="term" value="F:zinc ion binding"/>
    <property type="evidence" value="ECO:0007669"/>
    <property type="project" value="UniProtKB-KW"/>
</dbReference>
<dbReference type="GO" id="GO:0042742">
    <property type="term" value="P:defense response to bacterium"/>
    <property type="evidence" value="ECO:0000315"/>
    <property type="project" value="TAIR"/>
</dbReference>
<dbReference type="GO" id="GO:0006355">
    <property type="term" value="P:regulation of DNA-templated transcription"/>
    <property type="evidence" value="ECO:0000304"/>
    <property type="project" value="TAIR"/>
</dbReference>
<dbReference type="GO" id="GO:0010468">
    <property type="term" value="P:regulation of gene expression"/>
    <property type="evidence" value="ECO:0000315"/>
    <property type="project" value="TAIR"/>
</dbReference>
<dbReference type="FunFam" id="4.10.1100.10:FF:000001">
    <property type="entry name" value="Squamosa promoter-binding-like protein 14"/>
    <property type="match status" value="1"/>
</dbReference>
<dbReference type="Gene3D" id="4.10.1100.10">
    <property type="entry name" value="Transcription factor, SBP-box domain"/>
    <property type="match status" value="1"/>
</dbReference>
<dbReference type="InterPro" id="IPR044817">
    <property type="entry name" value="SBP-like"/>
</dbReference>
<dbReference type="InterPro" id="IPR004333">
    <property type="entry name" value="SBP_dom"/>
</dbReference>
<dbReference type="InterPro" id="IPR036893">
    <property type="entry name" value="SBP_sf"/>
</dbReference>
<dbReference type="PANTHER" id="PTHR31251">
    <property type="entry name" value="SQUAMOSA PROMOTER-BINDING-LIKE PROTEIN 4"/>
    <property type="match status" value="1"/>
</dbReference>
<dbReference type="PANTHER" id="PTHR31251:SF226">
    <property type="entry name" value="SQUAMOSA PROMOTER-BINDING-LIKE PROTEIN 6"/>
    <property type="match status" value="1"/>
</dbReference>
<dbReference type="Pfam" id="PF03110">
    <property type="entry name" value="SBP"/>
    <property type="match status" value="1"/>
</dbReference>
<dbReference type="SUPFAM" id="SSF103612">
    <property type="entry name" value="SBT domain"/>
    <property type="match status" value="1"/>
</dbReference>
<dbReference type="PROSITE" id="PS51141">
    <property type="entry name" value="ZF_SBP"/>
    <property type="match status" value="1"/>
</dbReference>
<feature type="chain" id="PRO_0000132727" description="Squamosa promoter-binding-like protein 6">
    <location>
        <begin position="1"/>
        <end position="405"/>
    </location>
</feature>
<feature type="zinc finger region" description="SBP-type" evidence="3">
    <location>
        <begin position="121"/>
        <end position="198"/>
    </location>
</feature>
<feature type="short sequence motif" description="Bipartite nuclear localization signal" evidence="2">
    <location>
        <begin position="181"/>
        <end position="197"/>
    </location>
</feature>
<feature type="binding site" evidence="3">
    <location>
        <position position="124"/>
    </location>
    <ligand>
        <name>Zn(2+)</name>
        <dbReference type="ChEBI" id="CHEBI:29105"/>
        <label>1</label>
    </ligand>
</feature>
<feature type="binding site" evidence="3">
    <location>
        <position position="129"/>
    </location>
    <ligand>
        <name>Zn(2+)</name>
        <dbReference type="ChEBI" id="CHEBI:29105"/>
        <label>1</label>
    </ligand>
</feature>
<feature type="binding site" evidence="3">
    <location>
        <position position="146"/>
    </location>
    <ligand>
        <name>Zn(2+)</name>
        <dbReference type="ChEBI" id="CHEBI:29105"/>
        <label>1</label>
    </ligand>
</feature>
<feature type="binding site" evidence="3">
    <location>
        <position position="149"/>
    </location>
    <ligand>
        <name>Zn(2+)</name>
        <dbReference type="ChEBI" id="CHEBI:29105"/>
        <label>1</label>
    </ligand>
</feature>
<feature type="binding site" evidence="3">
    <location>
        <position position="165"/>
    </location>
    <ligand>
        <name>Zn(2+)</name>
        <dbReference type="ChEBI" id="CHEBI:29105"/>
        <label>2</label>
    </ligand>
</feature>
<feature type="binding site" evidence="3">
    <location>
        <position position="168"/>
    </location>
    <ligand>
        <name>Zn(2+)</name>
        <dbReference type="ChEBI" id="CHEBI:29105"/>
        <label>2</label>
    </ligand>
</feature>
<feature type="binding site" evidence="3">
    <location>
        <position position="172"/>
    </location>
    <ligand>
        <name>Zn(2+)</name>
        <dbReference type="ChEBI" id="CHEBI:29105"/>
        <label>2</label>
    </ligand>
</feature>
<feature type="binding site" evidence="3">
    <location>
        <position position="184"/>
    </location>
    <ligand>
        <name>Zn(2+)</name>
        <dbReference type="ChEBI" id="CHEBI:29105"/>
        <label>2</label>
    </ligand>
</feature>
<reference key="1">
    <citation type="journal article" date="1999" name="Gene">
        <title>Molecular characterization of the Arabidopsis SBP-box genes.</title>
        <authorList>
            <person name="Cardon G.H."/>
            <person name="Hoehmann S."/>
            <person name="Klein J."/>
            <person name="Nettesheim K."/>
            <person name="Saedler H."/>
            <person name="Huijser P."/>
        </authorList>
    </citation>
    <scope>NUCLEOTIDE SEQUENCE [GENOMIC DNA / MRNA]</scope>
    <scope>DEVELOPMENTAL STAGE</scope>
    <source>
        <strain>cv. Columbia</strain>
        <tissue>Flower</tissue>
    </source>
</reference>
<reference key="2">
    <citation type="journal article" date="2000" name="Nature">
        <title>Sequence and analysis of chromosome 1 of the plant Arabidopsis thaliana.</title>
        <authorList>
            <person name="Theologis A."/>
            <person name="Ecker J.R."/>
            <person name="Palm C.J."/>
            <person name="Federspiel N.A."/>
            <person name="Kaul S."/>
            <person name="White O."/>
            <person name="Alonso J."/>
            <person name="Altafi H."/>
            <person name="Araujo R."/>
            <person name="Bowman C.L."/>
            <person name="Brooks S.Y."/>
            <person name="Buehler E."/>
            <person name="Chan A."/>
            <person name="Chao Q."/>
            <person name="Chen H."/>
            <person name="Cheuk R.F."/>
            <person name="Chin C.W."/>
            <person name="Chung M.K."/>
            <person name="Conn L."/>
            <person name="Conway A.B."/>
            <person name="Conway A.R."/>
            <person name="Creasy T.H."/>
            <person name="Dewar K."/>
            <person name="Dunn P."/>
            <person name="Etgu P."/>
            <person name="Feldblyum T.V."/>
            <person name="Feng J.-D."/>
            <person name="Fong B."/>
            <person name="Fujii C.Y."/>
            <person name="Gill J.E."/>
            <person name="Goldsmith A.D."/>
            <person name="Haas B."/>
            <person name="Hansen N.F."/>
            <person name="Hughes B."/>
            <person name="Huizar L."/>
            <person name="Hunter J.L."/>
            <person name="Jenkins J."/>
            <person name="Johnson-Hopson C."/>
            <person name="Khan S."/>
            <person name="Khaykin E."/>
            <person name="Kim C.J."/>
            <person name="Koo H.L."/>
            <person name="Kremenetskaia I."/>
            <person name="Kurtz D.B."/>
            <person name="Kwan A."/>
            <person name="Lam B."/>
            <person name="Langin-Hooper S."/>
            <person name="Lee A."/>
            <person name="Lee J.M."/>
            <person name="Lenz C.A."/>
            <person name="Li J.H."/>
            <person name="Li Y.-P."/>
            <person name="Lin X."/>
            <person name="Liu S.X."/>
            <person name="Liu Z.A."/>
            <person name="Luros J.S."/>
            <person name="Maiti R."/>
            <person name="Marziali A."/>
            <person name="Militscher J."/>
            <person name="Miranda M."/>
            <person name="Nguyen M."/>
            <person name="Nierman W.C."/>
            <person name="Osborne B.I."/>
            <person name="Pai G."/>
            <person name="Peterson J."/>
            <person name="Pham P.K."/>
            <person name="Rizzo M."/>
            <person name="Rooney T."/>
            <person name="Rowley D."/>
            <person name="Sakano H."/>
            <person name="Salzberg S.L."/>
            <person name="Schwartz J.R."/>
            <person name="Shinn P."/>
            <person name="Southwick A.M."/>
            <person name="Sun H."/>
            <person name="Tallon L.J."/>
            <person name="Tambunga G."/>
            <person name="Toriumi M.J."/>
            <person name="Town C.D."/>
            <person name="Utterback T."/>
            <person name="Van Aken S."/>
            <person name="Vaysberg M."/>
            <person name="Vysotskaia V.S."/>
            <person name="Walker M."/>
            <person name="Wu D."/>
            <person name="Yu G."/>
            <person name="Fraser C.M."/>
            <person name="Venter J.C."/>
            <person name="Davis R.W."/>
        </authorList>
    </citation>
    <scope>NUCLEOTIDE SEQUENCE [LARGE SCALE GENOMIC DNA]</scope>
    <source>
        <strain>cv. Columbia</strain>
    </source>
</reference>
<reference key="3">
    <citation type="journal article" date="2017" name="Plant J.">
        <title>Araport11: a complete reannotation of the Arabidopsis thaliana reference genome.</title>
        <authorList>
            <person name="Cheng C.Y."/>
            <person name="Krishnakumar V."/>
            <person name="Chan A.P."/>
            <person name="Thibaud-Nissen F."/>
            <person name="Schobel S."/>
            <person name="Town C.D."/>
        </authorList>
    </citation>
    <scope>GENOME REANNOTATION</scope>
    <source>
        <strain>cv. Columbia</strain>
    </source>
</reference>
<reference key="4">
    <citation type="journal article" date="2003" name="Science">
        <title>Empirical analysis of transcriptional activity in the Arabidopsis genome.</title>
        <authorList>
            <person name="Yamada K."/>
            <person name="Lim J."/>
            <person name="Dale J.M."/>
            <person name="Chen H."/>
            <person name="Shinn P."/>
            <person name="Palm C.J."/>
            <person name="Southwick A.M."/>
            <person name="Wu H.C."/>
            <person name="Kim C.J."/>
            <person name="Nguyen M."/>
            <person name="Pham P.K."/>
            <person name="Cheuk R.F."/>
            <person name="Karlin-Newmann G."/>
            <person name="Liu S.X."/>
            <person name="Lam B."/>
            <person name="Sakano H."/>
            <person name="Wu T."/>
            <person name="Yu G."/>
            <person name="Miranda M."/>
            <person name="Quach H.L."/>
            <person name="Tripp M."/>
            <person name="Chang C.H."/>
            <person name="Lee J.M."/>
            <person name="Toriumi M.J."/>
            <person name="Chan M.M."/>
            <person name="Tang C.C."/>
            <person name="Onodera C.S."/>
            <person name="Deng J.M."/>
            <person name="Akiyama K."/>
            <person name="Ansari Y."/>
            <person name="Arakawa T."/>
            <person name="Banh J."/>
            <person name="Banno F."/>
            <person name="Bowser L."/>
            <person name="Brooks S.Y."/>
            <person name="Carninci P."/>
            <person name="Chao Q."/>
            <person name="Choy N."/>
            <person name="Enju A."/>
            <person name="Goldsmith A.D."/>
            <person name="Gurjal M."/>
            <person name="Hansen N.F."/>
            <person name="Hayashizaki Y."/>
            <person name="Johnson-Hopson C."/>
            <person name="Hsuan V.W."/>
            <person name="Iida K."/>
            <person name="Karnes M."/>
            <person name="Khan S."/>
            <person name="Koesema E."/>
            <person name="Ishida J."/>
            <person name="Jiang P.X."/>
            <person name="Jones T."/>
            <person name="Kawai J."/>
            <person name="Kamiya A."/>
            <person name="Meyers C."/>
            <person name="Nakajima M."/>
            <person name="Narusaka M."/>
            <person name="Seki M."/>
            <person name="Sakurai T."/>
            <person name="Satou M."/>
            <person name="Tamse R."/>
            <person name="Vaysberg M."/>
            <person name="Wallender E.K."/>
            <person name="Wong C."/>
            <person name="Yamamura Y."/>
            <person name="Yuan S."/>
            <person name="Shinozaki K."/>
            <person name="Davis R.W."/>
            <person name="Theologis A."/>
            <person name="Ecker J.R."/>
        </authorList>
    </citation>
    <scope>NUCLEOTIDE SEQUENCE [LARGE SCALE MRNA]</scope>
    <source>
        <strain>cv. Columbia</strain>
    </source>
</reference>
<reference key="5">
    <citation type="submission" date="2006-07" db="EMBL/GenBank/DDBJ databases">
        <title>Large-scale analysis of RIKEN Arabidopsis full-length (RAFL) cDNAs.</title>
        <authorList>
            <person name="Totoki Y."/>
            <person name="Seki M."/>
            <person name="Ishida J."/>
            <person name="Nakajima M."/>
            <person name="Enju A."/>
            <person name="Kamiya A."/>
            <person name="Narusaka M."/>
            <person name="Shin-i T."/>
            <person name="Nakagawa M."/>
            <person name="Sakamoto N."/>
            <person name="Oishi K."/>
            <person name="Kohara Y."/>
            <person name="Kobayashi M."/>
            <person name="Toyoda A."/>
            <person name="Sakaki Y."/>
            <person name="Sakurai T."/>
            <person name="Iida K."/>
            <person name="Akiyama K."/>
            <person name="Satou M."/>
            <person name="Toyoda T."/>
            <person name="Konagaya A."/>
            <person name="Carninci P."/>
            <person name="Kawai J."/>
            <person name="Hayashizaki Y."/>
            <person name="Shinozaki K."/>
        </authorList>
    </citation>
    <scope>NUCLEOTIDE SEQUENCE [LARGE SCALE MRNA]</scope>
    <source>
        <strain>cv. Columbia</strain>
    </source>
</reference>
<reference key="6">
    <citation type="journal article" date="2002" name="Cell">
        <title>Prediction of plant microRNA targets.</title>
        <authorList>
            <person name="Rhoades M.W."/>
            <person name="Reinhart B.J."/>
            <person name="Lim L.P."/>
            <person name="Burge C.B."/>
            <person name="Bartel B."/>
            <person name="Bartel D.P."/>
        </authorList>
    </citation>
    <scope>INDUCTION</scope>
</reference>
<reference key="7">
    <citation type="journal article" date="2003" name="Development">
        <title>Dissection of floral induction pathways using global expression analysis.</title>
        <authorList>
            <person name="Schmid M."/>
            <person name="Uhlenhaut N.H."/>
            <person name="Godard F."/>
            <person name="Demar M."/>
            <person name="Bressan R."/>
            <person name="Weigel D."/>
            <person name="Lohmann J.U."/>
        </authorList>
    </citation>
    <scope>DEVELOPMENTAL STAGE</scope>
</reference>
<evidence type="ECO:0000250" key="1"/>
<evidence type="ECO:0000255" key="2"/>
<evidence type="ECO:0000255" key="3">
    <source>
        <dbReference type="PROSITE-ProRule" id="PRU00470"/>
    </source>
</evidence>
<evidence type="ECO:0000269" key="4">
    <source>
    </source>
</evidence>
<evidence type="ECO:0000269" key="5">
    <source>
    </source>
</evidence>
<evidence type="ECO:0000305" key="6"/>
<evidence type="ECO:0000305" key="7">
    <source>
    </source>
</evidence>
<sequence>MDSWSYGRSVFMSNETLLPCDTFAKNRRFEQRLSNNDDVLISDMAGNSNGFSAVSITKVVPEEEDEENISSSSKFSSQELNRIDFKLRSFLDLGNDDDDTSSRGFALPSKKSRASNLCSQNPLCQVYGCSKDLSSSKDYHKRHRVCEAHSKTSVVIVNGLEQRFCQQCSRFHFLSEFDDGKRSCRRRLAGHNERRRKPAFYFLPGKRHKLLRTSQDVVGNKFLENSSLVLPESFPGSLLYRVIDEDDHRTSRLVSFKDEPTCSMFPTNEQNSSRTYESKPAIYSTEVSSIWDLHETAASRSTRALSLLSAQSQQHLSKFPNTTFSITQPNQNLNHSSSTDYHQMEQPLWIDPGKTNSAGSSSCKGKGTSTVDLLQLSSHLQRIEQQRNYTGDVKQEYNELYFPGS</sequence>
<protein>
    <recommendedName>
        <fullName>Squamosa promoter-binding-like protein 6</fullName>
    </recommendedName>
</protein>
<keyword id="KW-0238">DNA-binding</keyword>
<keyword id="KW-0479">Metal-binding</keyword>
<keyword id="KW-0539">Nucleus</keyword>
<keyword id="KW-1185">Reference proteome</keyword>
<keyword id="KW-0804">Transcription</keyword>
<keyword id="KW-0805">Transcription regulation</keyword>
<keyword id="KW-0862">Zinc</keyword>
<keyword id="KW-0863">Zinc-finger</keyword>
<name>SPL6_ARATH</name>